<protein>
    <recommendedName>
        <fullName evidence="1">3-isopropylmalate dehydratase small subunit</fullName>
        <ecNumber evidence="1">4.2.1.33</ecNumber>
    </recommendedName>
    <alternativeName>
        <fullName evidence="1">Alpha-IPM isomerase</fullName>
        <shortName evidence="1">IPMI</shortName>
    </alternativeName>
    <alternativeName>
        <fullName evidence="1">Isopropylmalate isomerase</fullName>
    </alternativeName>
</protein>
<sequence>MKAFTKITAIVAPLDRSNVDTDAIIPKQFLKSIKRSGFGPNAFDEWRYLDHGEPGMDNSKRPLNPDFSLNQPRYQGAQILLTRKNFGCGSSREHAPWALDDYGFRAVIAPSFADIFFNNCYKNGLLPIVLTEEQVDRLFKEVEANEGYQLSIDLAEQTLTTPGGETFTFDITEHRKHCLLNGLDEIGLTLQHADEIHAFEEKRRQSQPWLFNG</sequence>
<evidence type="ECO:0000255" key="1">
    <source>
        <dbReference type="HAMAP-Rule" id="MF_01031"/>
    </source>
</evidence>
<feature type="chain" id="PRO_1000063795" description="3-isopropylmalate dehydratase small subunit">
    <location>
        <begin position="1"/>
        <end position="213"/>
    </location>
</feature>
<comment type="function">
    <text evidence="1">Catalyzes the isomerization between 2-isopropylmalate and 3-isopropylmalate, via the formation of 2-isopropylmaleate.</text>
</comment>
<comment type="catalytic activity">
    <reaction evidence="1">
        <text>(2R,3S)-3-isopropylmalate = (2S)-2-isopropylmalate</text>
        <dbReference type="Rhea" id="RHEA:32287"/>
        <dbReference type="ChEBI" id="CHEBI:1178"/>
        <dbReference type="ChEBI" id="CHEBI:35121"/>
        <dbReference type="EC" id="4.2.1.33"/>
    </reaction>
</comment>
<comment type="pathway">
    <text evidence="1">Amino-acid biosynthesis; L-leucine biosynthesis; L-leucine from 3-methyl-2-oxobutanoate: step 2/4.</text>
</comment>
<comment type="subunit">
    <text evidence="1">Heterodimer of LeuC and LeuD.</text>
</comment>
<comment type="similarity">
    <text evidence="1">Belongs to the LeuD family. LeuD type 1 subfamily.</text>
</comment>
<gene>
    <name evidence="1" type="primary">leuD</name>
    <name type="ordered locus">NMC1179</name>
</gene>
<accession>A1KU82</accession>
<organism>
    <name type="scientific">Neisseria meningitidis serogroup C / serotype 2a (strain ATCC 700532 / DSM 15464 / FAM18)</name>
    <dbReference type="NCBI Taxonomy" id="272831"/>
    <lineage>
        <taxon>Bacteria</taxon>
        <taxon>Pseudomonadati</taxon>
        <taxon>Pseudomonadota</taxon>
        <taxon>Betaproteobacteria</taxon>
        <taxon>Neisseriales</taxon>
        <taxon>Neisseriaceae</taxon>
        <taxon>Neisseria</taxon>
    </lineage>
</organism>
<keyword id="KW-0028">Amino-acid biosynthesis</keyword>
<keyword id="KW-0100">Branched-chain amino acid biosynthesis</keyword>
<keyword id="KW-0432">Leucine biosynthesis</keyword>
<keyword id="KW-0456">Lyase</keyword>
<proteinExistence type="inferred from homology"/>
<reference key="1">
    <citation type="journal article" date="2007" name="PLoS Genet.">
        <title>Meningococcal genetic variation mechanisms viewed through comparative analysis of serogroup C strain FAM18.</title>
        <authorList>
            <person name="Bentley S.D."/>
            <person name="Vernikos G.S."/>
            <person name="Snyder L.A.S."/>
            <person name="Churcher C."/>
            <person name="Arrowsmith C."/>
            <person name="Chillingworth T."/>
            <person name="Cronin A."/>
            <person name="Davis P.H."/>
            <person name="Holroyd N.E."/>
            <person name="Jagels K."/>
            <person name="Maddison M."/>
            <person name="Moule S."/>
            <person name="Rabbinowitsch E."/>
            <person name="Sharp S."/>
            <person name="Unwin L."/>
            <person name="Whitehead S."/>
            <person name="Quail M.A."/>
            <person name="Achtman M."/>
            <person name="Barrell B.G."/>
            <person name="Saunders N.J."/>
            <person name="Parkhill J."/>
        </authorList>
    </citation>
    <scope>NUCLEOTIDE SEQUENCE [LARGE SCALE GENOMIC DNA]</scope>
    <source>
        <strain>ATCC 700532 / DSM 15464 / FAM18</strain>
    </source>
</reference>
<name>LEUD_NEIMF</name>
<dbReference type="EC" id="4.2.1.33" evidence="1"/>
<dbReference type="EMBL" id="AM421808">
    <property type="protein sequence ID" value="CAM10424.1"/>
    <property type="molecule type" value="Genomic_DNA"/>
</dbReference>
<dbReference type="RefSeq" id="WP_002224506.1">
    <property type="nucleotide sequence ID" value="NC_008767.1"/>
</dbReference>
<dbReference type="SMR" id="A1KU82"/>
<dbReference type="GeneID" id="93385953"/>
<dbReference type="KEGG" id="nmc:NMC1179"/>
<dbReference type="HOGENOM" id="CLU_081378_0_3_4"/>
<dbReference type="UniPathway" id="UPA00048">
    <property type="reaction ID" value="UER00071"/>
</dbReference>
<dbReference type="Proteomes" id="UP000002286">
    <property type="component" value="Chromosome"/>
</dbReference>
<dbReference type="GO" id="GO:0009316">
    <property type="term" value="C:3-isopropylmalate dehydratase complex"/>
    <property type="evidence" value="ECO:0007669"/>
    <property type="project" value="InterPro"/>
</dbReference>
<dbReference type="GO" id="GO:0003861">
    <property type="term" value="F:3-isopropylmalate dehydratase activity"/>
    <property type="evidence" value="ECO:0007669"/>
    <property type="project" value="UniProtKB-UniRule"/>
</dbReference>
<dbReference type="GO" id="GO:0009098">
    <property type="term" value="P:L-leucine biosynthetic process"/>
    <property type="evidence" value="ECO:0007669"/>
    <property type="project" value="UniProtKB-UniRule"/>
</dbReference>
<dbReference type="CDD" id="cd01577">
    <property type="entry name" value="IPMI_Swivel"/>
    <property type="match status" value="1"/>
</dbReference>
<dbReference type="FunFam" id="3.20.19.10:FF:000003">
    <property type="entry name" value="3-isopropylmalate dehydratase small subunit"/>
    <property type="match status" value="1"/>
</dbReference>
<dbReference type="Gene3D" id="3.20.19.10">
    <property type="entry name" value="Aconitase, domain 4"/>
    <property type="match status" value="1"/>
</dbReference>
<dbReference type="HAMAP" id="MF_01031">
    <property type="entry name" value="LeuD_type1"/>
    <property type="match status" value="1"/>
</dbReference>
<dbReference type="InterPro" id="IPR004431">
    <property type="entry name" value="3-IsopropMal_deHydase_ssu"/>
</dbReference>
<dbReference type="InterPro" id="IPR015928">
    <property type="entry name" value="Aconitase/3IPM_dehydase_swvl"/>
</dbReference>
<dbReference type="InterPro" id="IPR000573">
    <property type="entry name" value="AconitaseA/IPMdHydase_ssu_swvl"/>
</dbReference>
<dbReference type="InterPro" id="IPR033940">
    <property type="entry name" value="IPMI_Swivel"/>
</dbReference>
<dbReference type="InterPro" id="IPR050075">
    <property type="entry name" value="LeuD"/>
</dbReference>
<dbReference type="NCBIfam" id="TIGR00171">
    <property type="entry name" value="leuD"/>
    <property type="match status" value="1"/>
</dbReference>
<dbReference type="NCBIfam" id="NF002458">
    <property type="entry name" value="PRK01641.1"/>
    <property type="match status" value="1"/>
</dbReference>
<dbReference type="PANTHER" id="PTHR43345:SF5">
    <property type="entry name" value="3-ISOPROPYLMALATE DEHYDRATASE SMALL SUBUNIT"/>
    <property type="match status" value="1"/>
</dbReference>
<dbReference type="PANTHER" id="PTHR43345">
    <property type="entry name" value="3-ISOPROPYLMALATE DEHYDRATASE SMALL SUBUNIT 2-RELATED-RELATED"/>
    <property type="match status" value="1"/>
</dbReference>
<dbReference type="Pfam" id="PF00694">
    <property type="entry name" value="Aconitase_C"/>
    <property type="match status" value="1"/>
</dbReference>
<dbReference type="SUPFAM" id="SSF52016">
    <property type="entry name" value="LeuD/IlvD-like"/>
    <property type="match status" value="1"/>
</dbReference>